<name>IBP4_PIG</name>
<reference key="1">
    <citation type="submission" date="2006-08" db="EMBL/GenBank/DDBJ databases">
        <authorList>
            <person name="Liu G.Y."/>
        </authorList>
    </citation>
    <scope>NUCLEOTIDE SEQUENCE [LARGE SCALE MRNA]</scope>
</reference>
<reference key="2">
    <citation type="journal article" date="1991" name="Biochem. Biophys. Res. Commun.">
        <title>Identification and NH2-terminal amino acid sequence of three insulin-like growth factor-binding proteins in porcine serum.</title>
        <authorList>
            <person name="Coleman M.E."/>
            <person name="Pan Y.-C.E."/>
            <person name="Etherton T.D."/>
        </authorList>
    </citation>
    <scope>PROTEIN SEQUENCE OF 23-38</scope>
</reference>
<proteinExistence type="evidence at protein level"/>
<accession>P24854</accession>
<accession>Q06AV6</accession>
<sequence length="259" mass="28230">MLPLCLVAALLLSASGPRPSLGDEAIHCPPCSEEKLARCRPPVGCEELVREPGCGCCATCALGKGMPCGVYTPRCGSGLRCYPPRGVEKPLHTLMHGQGLCMELAEIEAIQESLQPSDKDEGDHPNNSFSPCSPQDRRCLQKHLAKIRDRSTSGGKMKVIGAPREEARPVPQGSCQSELHRALERLAASQRRTHEDLYIIPIPNCDRNGNFHPKQCHPALDGQRGKCWCVDRKTGVKLPGGLEPKGELDCHQLADSFRE</sequence>
<gene>
    <name type="primary">IGFBP4</name>
</gene>
<feature type="signal peptide" evidence="7">
    <location>
        <begin position="1"/>
        <end position="22"/>
    </location>
</feature>
<feature type="chain" id="PRO_0000152773" description="Insulin-like growth factor-binding protein 4">
    <location>
        <begin position="23"/>
        <end position="259"/>
    </location>
</feature>
<feature type="domain" description="IGFBP N-terminal" evidence="5">
    <location>
        <begin position="24"/>
        <end position="104"/>
    </location>
</feature>
<feature type="domain" description="Thyroglobulin type-1" evidence="4">
    <location>
        <begin position="172"/>
        <end position="250"/>
    </location>
</feature>
<feature type="region of interest" description="Disordered" evidence="6">
    <location>
        <begin position="115"/>
        <end position="136"/>
    </location>
</feature>
<feature type="modified residue" description="Phosphoserine" evidence="2">
    <location>
        <position position="256"/>
    </location>
</feature>
<feature type="glycosylation site" description="N-linked (GlcNAc...) asparagine" evidence="3">
    <location>
        <position position="126"/>
    </location>
</feature>
<feature type="disulfide bond" evidence="5">
    <location>
        <begin position="28"/>
        <end position="54"/>
    </location>
</feature>
<feature type="disulfide bond" evidence="5">
    <location>
        <begin position="31"/>
        <end position="56"/>
    </location>
</feature>
<feature type="disulfide bond" evidence="5">
    <location>
        <begin position="39"/>
        <end position="57"/>
    </location>
</feature>
<feature type="disulfide bond" evidence="5">
    <location>
        <begin position="45"/>
        <end position="60"/>
    </location>
</feature>
<feature type="disulfide bond" evidence="5">
    <location>
        <begin position="68"/>
        <end position="81"/>
    </location>
</feature>
<feature type="disulfide bond" evidence="5">
    <location>
        <begin position="75"/>
        <end position="101"/>
    </location>
</feature>
<feature type="disulfide bond" evidence="4">
    <location>
        <begin position="132"/>
        <end position="139"/>
    </location>
</feature>
<feature type="disulfide bond" evidence="4">
    <location>
        <begin position="175"/>
        <end position="205"/>
    </location>
</feature>
<feature type="disulfide bond" evidence="4">
    <location>
        <begin position="216"/>
        <end position="227"/>
    </location>
</feature>
<feature type="disulfide bond" evidence="4">
    <location>
        <begin position="229"/>
        <end position="250"/>
    </location>
</feature>
<feature type="sequence conflict" description="In Ref. 2; AA sequence." evidence="8" ref="2">
    <original>C</original>
    <variation>P</variation>
    <location>
        <position position="31"/>
    </location>
</feature>
<evidence type="ECO:0000250" key="1"/>
<evidence type="ECO:0000250" key="2">
    <source>
        <dbReference type="UniProtKB" id="P22692"/>
    </source>
</evidence>
<evidence type="ECO:0000255" key="3"/>
<evidence type="ECO:0000255" key="4">
    <source>
        <dbReference type="PROSITE-ProRule" id="PRU00500"/>
    </source>
</evidence>
<evidence type="ECO:0000255" key="5">
    <source>
        <dbReference type="PROSITE-ProRule" id="PRU00653"/>
    </source>
</evidence>
<evidence type="ECO:0000256" key="6">
    <source>
        <dbReference type="SAM" id="MobiDB-lite"/>
    </source>
</evidence>
<evidence type="ECO:0000269" key="7">
    <source>
    </source>
</evidence>
<evidence type="ECO:0000305" key="8"/>
<comment type="function">
    <text>IGF-binding proteins prolong the half-life of the IGFs and have been shown to either inhibit or stimulate the growth promoting effects of the IGFs on cell culture. They alter the interaction of IGFs with their cell surface receptors.</text>
</comment>
<comment type="subunit">
    <text evidence="1">Binds IGF2 more than IGF1.</text>
</comment>
<comment type="subcellular location">
    <subcellularLocation>
        <location>Secreted</location>
    </subcellularLocation>
</comment>
<organism>
    <name type="scientific">Sus scrofa</name>
    <name type="common">Pig</name>
    <dbReference type="NCBI Taxonomy" id="9823"/>
    <lineage>
        <taxon>Eukaryota</taxon>
        <taxon>Metazoa</taxon>
        <taxon>Chordata</taxon>
        <taxon>Craniata</taxon>
        <taxon>Vertebrata</taxon>
        <taxon>Euteleostomi</taxon>
        <taxon>Mammalia</taxon>
        <taxon>Eutheria</taxon>
        <taxon>Laurasiatheria</taxon>
        <taxon>Artiodactyla</taxon>
        <taxon>Suina</taxon>
        <taxon>Suidae</taxon>
        <taxon>Sus</taxon>
    </lineage>
</organism>
<keyword id="KW-0903">Direct protein sequencing</keyword>
<keyword id="KW-1015">Disulfide bond</keyword>
<keyword id="KW-0325">Glycoprotein</keyword>
<keyword id="KW-0340">Growth factor binding</keyword>
<keyword id="KW-0597">Phosphoprotein</keyword>
<keyword id="KW-1185">Reference proteome</keyword>
<keyword id="KW-0964">Secreted</keyword>
<keyword id="KW-0732">Signal</keyword>
<dbReference type="EMBL" id="DQ917619">
    <property type="protein sequence ID" value="ABI97164.1"/>
    <property type="molecule type" value="mRNA"/>
</dbReference>
<dbReference type="PIR" id="JH0517">
    <property type="entry name" value="JH0517"/>
</dbReference>
<dbReference type="RefSeq" id="NP_001116601.1">
    <property type="nucleotide sequence ID" value="NM_001123129.1"/>
</dbReference>
<dbReference type="SMR" id="P24854"/>
<dbReference type="FunCoup" id="P24854">
    <property type="interactions" value="297"/>
</dbReference>
<dbReference type="STRING" id="9823.ENSSSCP00000018516"/>
<dbReference type="GlyCosmos" id="P24854">
    <property type="glycosylation" value="1 site, No reported glycans"/>
</dbReference>
<dbReference type="GlyGen" id="P24854">
    <property type="glycosylation" value="1 site"/>
</dbReference>
<dbReference type="PaxDb" id="9823-ENSSSCP00000018516"/>
<dbReference type="GeneID" id="100144490"/>
<dbReference type="KEGG" id="ssc:100144490"/>
<dbReference type="CTD" id="3487"/>
<dbReference type="eggNOG" id="ENOG502QTC8">
    <property type="taxonomic scope" value="Eukaryota"/>
</dbReference>
<dbReference type="InParanoid" id="P24854"/>
<dbReference type="OrthoDB" id="8477465at2759"/>
<dbReference type="Proteomes" id="UP000008227">
    <property type="component" value="Unplaced"/>
</dbReference>
<dbReference type="Proteomes" id="UP000314985">
    <property type="component" value="Unplaced"/>
</dbReference>
<dbReference type="Proteomes" id="UP000694570">
    <property type="component" value="Unplaced"/>
</dbReference>
<dbReference type="Proteomes" id="UP000694571">
    <property type="component" value="Unplaced"/>
</dbReference>
<dbReference type="Proteomes" id="UP000694720">
    <property type="component" value="Unplaced"/>
</dbReference>
<dbReference type="Proteomes" id="UP000694722">
    <property type="component" value="Unplaced"/>
</dbReference>
<dbReference type="Proteomes" id="UP000694723">
    <property type="component" value="Unplaced"/>
</dbReference>
<dbReference type="Proteomes" id="UP000694724">
    <property type="component" value="Unplaced"/>
</dbReference>
<dbReference type="Proteomes" id="UP000694725">
    <property type="component" value="Unplaced"/>
</dbReference>
<dbReference type="Proteomes" id="UP000694726">
    <property type="component" value="Unplaced"/>
</dbReference>
<dbReference type="Proteomes" id="UP000694727">
    <property type="component" value="Unplaced"/>
</dbReference>
<dbReference type="Proteomes" id="UP000694728">
    <property type="component" value="Unplaced"/>
</dbReference>
<dbReference type="GO" id="GO:0005615">
    <property type="term" value="C:extracellular space"/>
    <property type="evidence" value="ECO:0000318"/>
    <property type="project" value="GO_Central"/>
</dbReference>
<dbReference type="GO" id="GO:0031994">
    <property type="term" value="F:insulin-like growth factor I binding"/>
    <property type="evidence" value="ECO:0000318"/>
    <property type="project" value="GO_Central"/>
</dbReference>
<dbReference type="GO" id="GO:0031995">
    <property type="term" value="F:insulin-like growth factor II binding"/>
    <property type="evidence" value="ECO:0000318"/>
    <property type="project" value="GO_Central"/>
</dbReference>
<dbReference type="GO" id="GO:0043567">
    <property type="term" value="P:regulation of insulin-like growth factor receptor signaling pathway"/>
    <property type="evidence" value="ECO:0000318"/>
    <property type="project" value="GO_Central"/>
</dbReference>
<dbReference type="CDD" id="cd00191">
    <property type="entry name" value="TY"/>
    <property type="match status" value="1"/>
</dbReference>
<dbReference type="FunFam" id="4.10.40.20:FF:000001">
    <property type="entry name" value="Insulin-like growth factor binding protein 5"/>
    <property type="match status" value="1"/>
</dbReference>
<dbReference type="FunFam" id="4.10.800.10:FF:000002">
    <property type="entry name" value="Insulin-like growth factor-binding protein 2"/>
    <property type="match status" value="1"/>
</dbReference>
<dbReference type="Gene3D" id="4.10.40.20">
    <property type="match status" value="1"/>
</dbReference>
<dbReference type="Gene3D" id="4.10.800.10">
    <property type="entry name" value="Thyroglobulin type-1"/>
    <property type="match status" value="1"/>
</dbReference>
<dbReference type="InterPro" id="IPR009030">
    <property type="entry name" value="Growth_fac_rcpt_cys_sf"/>
</dbReference>
<dbReference type="InterPro" id="IPR022327">
    <property type="entry name" value="IGFBP-4"/>
</dbReference>
<dbReference type="InterPro" id="IPR000867">
    <property type="entry name" value="IGFBP-like"/>
</dbReference>
<dbReference type="InterPro" id="IPR022321">
    <property type="entry name" value="IGFBP_1-6_chordata"/>
</dbReference>
<dbReference type="InterPro" id="IPR017891">
    <property type="entry name" value="Insulin_GF-bd_Cys-rich_CS"/>
</dbReference>
<dbReference type="InterPro" id="IPR000716">
    <property type="entry name" value="Thyroglobulin_1"/>
</dbReference>
<dbReference type="InterPro" id="IPR036857">
    <property type="entry name" value="Thyroglobulin_1_sf"/>
</dbReference>
<dbReference type="PANTHER" id="PTHR11551">
    <property type="entry name" value="INSULIN-LIKE GROWTH FACTOR BINDING PROTEIN"/>
    <property type="match status" value="1"/>
</dbReference>
<dbReference type="PANTHER" id="PTHR11551:SF7">
    <property type="entry name" value="INSULIN-LIKE GROWTH FACTOR-BINDING PROTEIN 4"/>
    <property type="match status" value="1"/>
</dbReference>
<dbReference type="Pfam" id="PF00219">
    <property type="entry name" value="IGFBP"/>
    <property type="match status" value="1"/>
</dbReference>
<dbReference type="Pfam" id="PF00086">
    <property type="entry name" value="Thyroglobulin_1"/>
    <property type="match status" value="1"/>
</dbReference>
<dbReference type="PRINTS" id="PR01976">
    <property type="entry name" value="IGFBPFAMILY"/>
</dbReference>
<dbReference type="PRINTS" id="PR01980">
    <property type="entry name" value="IGFBPFAMILY4"/>
</dbReference>
<dbReference type="SMART" id="SM00121">
    <property type="entry name" value="IB"/>
    <property type="match status" value="1"/>
</dbReference>
<dbReference type="SMART" id="SM00211">
    <property type="entry name" value="TY"/>
    <property type="match status" value="1"/>
</dbReference>
<dbReference type="SUPFAM" id="SSF57184">
    <property type="entry name" value="Growth factor receptor domain"/>
    <property type="match status" value="1"/>
</dbReference>
<dbReference type="SUPFAM" id="SSF57610">
    <property type="entry name" value="Thyroglobulin type-1 domain"/>
    <property type="match status" value="1"/>
</dbReference>
<dbReference type="PROSITE" id="PS00222">
    <property type="entry name" value="IGFBP_N_1"/>
    <property type="match status" value="1"/>
</dbReference>
<dbReference type="PROSITE" id="PS51323">
    <property type="entry name" value="IGFBP_N_2"/>
    <property type="match status" value="1"/>
</dbReference>
<dbReference type="PROSITE" id="PS00484">
    <property type="entry name" value="THYROGLOBULIN_1_1"/>
    <property type="match status" value="1"/>
</dbReference>
<dbReference type="PROSITE" id="PS51162">
    <property type="entry name" value="THYROGLOBULIN_1_2"/>
    <property type="match status" value="1"/>
</dbReference>
<protein>
    <recommendedName>
        <fullName>Insulin-like growth factor-binding protein 4</fullName>
        <shortName>IBP-4</shortName>
        <shortName>IGF-binding protein 4</shortName>
        <shortName>IGFBP-4</shortName>
    </recommendedName>
</protein>